<feature type="chain" id="PRO_0000237880" description="Shikimate kinase">
    <location>
        <begin position="1"/>
        <end position="225"/>
    </location>
</feature>
<feature type="region of interest" description="Disordered" evidence="2">
    <location>
        <begin position="186"/>
        <end position="225"/>
    </location>
</feature>
<feature type="binding site" evidence="1">
    <location>
        <begin position="27"/>
        <end position="32"/>
    </location>
    <ligand>
        <name>ATP</name>
        <dbReference type="ChEBI" id="CHEBI:30616"/>
    </ligand>
</feature>
<feature type="binding site" evidence="1">
    <location>
        <position position="31"/>
    </location>
    <ligand>
        <name>Mg(2+)</name>
        <dbReference type="ChEBI" id="CHEBI:18420"/>
    </ligand>
</feature>
<feature type="binding site" evidence="1">
    <location>
        <position position="49"/>
    </location>
    <ligand>
        <name>substrate</name>
    </ligand>
</feature>
<feature type="binding site" evidence="1">
    <location>
        <position position="73"/>
    </location>
    <ligand>
        <name>substrate</name>
    </ligand>
</feature>
<feature type="binding site" evidence="1">
    <location>
        <position position="95"/>
    </location>
    <ligand>
        <name>substrate</name>
    </ligand>
</feature>
<feature type="binding site" evidence="1">
    <location>
        <position position="132"/>
    </location>
    <ligand>
        <name>ATP</name>
        <dbReference type="ChEBI" id="CHEBI:30616"/>
    </ligand>
</feature>
<feature type="binding site" evidence="1">
    <location>
        <position position="150"/>
    </location>
    <ligand>
        <name>substrate</name>
    </ligand>
</feature>
<keyword id="KW-0028">Amino-acid biosynthesis</keyword>
<keyword id="KW-0057">Aromatic amino acid biosynthesis</keyword>
<keyword id="KW-0067">ATP-binding</keyword>
<keyword id="KW-0963">Cytoplasm</keyword>
<keyword id="KW-0418">Kinase</keyword>
<keyword id="KW-0460">Magnesium</keyword>
<keyword id="KW-0479">Metal-binding</keyword>
<keyword id="KW-0547">Nucleotide-binding</keyword>
<keyword id="KW-1185">Reference proteome</keyword>
<keyword id="KW-0808">Transferase</keyword>
<gene>
    <name evidence="1" type="primary">aroK</name>
    <name type="ordered locus">Francci3_3208</name>
</gene>
<protein>
    <recommendedName>
        <fullName evidence="1">Shikimate kinase</fullName>
        <shortName evidence="1">SK</shortName>
        <ecNumber evidence="1">2.7.1.71</ecNumber>
    </recommendedName>
</protein>
<reference key="1">
    <citation type="journal article" date="2007" name="Genome Res.">
        <title>Genome characteristics of facultatively symbiotic Frankia sp. strains reflect host range and host plant biogeography.</title>
        <authorList>
            <person name="Normand P."/>
            <person name="Lapierre P."/>
            <person name="Tisa L.S."/>
            <person name="Gogarten J.P."/>
            <person name="Alloisio N."/>
            <person name="Bagnarol E."/>
            <person name="Bassi C.A."/>
            <person name="Berry A.M."/>
            <person name="Bickhart D.M."/>
            <person name="Choisne N."/>
            <person name="Couloux A."/>
            <person name="Cournoyer B."/>
            <person name="Cruveiller S."/>
            <person name="Daubin V."/>
            <person name="Demange N."/>
            <person name="Francino M.P."/>
            <person name="Goltsman E."/>
            <person name="Huang Y."/>
            <person name="Kopp O.R."/>
            <person name="Labarre L."/>
            <person name="Lapidus A."/>
            <person name="Lavire C."/>
            <person name="Marechal J."/>
            <person name="Martinez M."/>
            <person name="Mastronunzio J.E."/>
            <person name="Mullin B.C."/>
            <person name="Niemann J."/>
            <person name="Pujic P."/>
            <person name="Rawnsley T."/>
            <person name="Rouy Z."/>
            <person name="Schenowitz C."/>
            <person name="Sellstedt A."/>
            <person name="Tavares F."/>
            <person name="Tomkins J.P."/>
            <person name="Vallenet D."/>
            <person name="Valverde C."/>
            <person name="Wall L.G."/>
            <person name="Wang Y."/>
            <person name="Medigue C."/>
            <person name="Benson D.R."/>
        </authorList>
    </citation>
    <scope>NUCLEOTIDE SEQUENCE [LARGE SCALE GENOMIC DNA]</scope>
    <source>
        <strain>DSM 45818 / CECT 9043 / HFP020203 / CcI3</strain>
    </source>
</reference>
<organism>
    <name type="scientific">Frankia casuarinae (strain DSM 45818 / CECT 9043 / HFP020203 / CcI3)</name>
    <dbReference type="NCBI Taxonomy" id="106370"/>
    <lineage>
        <taxon>Bacteria</taxon>
        <taxon>Bacillati</taxon>
        <taxon>Actinomycetota</taxon>
        <taxon>Actinomycetes</taxon>
        <taxon>Frankiales</taxon>
        <taxon>Frankiaceae</taxon>
        <taxon>Frankia</taxon>
    </lineage>
</organism>
<accession>Q2J827</accession>
<name>AROK_FRACC</name>
<sequence length="225" mass="23047">MGEPATDAWTGPMAWTGPMVVLVGAPGAGKTTVGTQLARRWGVGFRDTDADIEAALGTTVADIFLDHGEEYFRLAERRAVAAALADHRGVLALGGGAVLDAENRTLLAGHRVVYLEVGVSDAVRRVGLARDRPLLVEGPRTRLAALLRARRPLYAEVATVVIDTAGHEPDEVTDLLAAALGPLLAGGSEPDEAADAAGGSEPDEAADAAGGSEPDEAADAAGGKR</sequence>
<comment type="function">
    <text evidence="1">Catalyzes the specific phosphorylation of the 3-hydroxyl group of shikimic acid using ATP as a cosubstrate.</text>
</comment>
<comment type="catalytic activity">
    <reaction evidence="1">
        <text>shikimate + ATP = 3-phosphoshikimate + ADP + H(+)</text>
        <dbReference type="Rhea" id="RHEA:13121"/>
        <dbReference type="ChEBI" id="CHEBI:15378"/>
        <dbReference type="ChEBI" id="CHEBI:30616"/>
        <dbReference type="ChEBI" id="CHEBI:36208"/>
        <dbReference type="ChEBI" id="CHEBI:145989"/>
        <dbReference type="ChEBI" id="CHEBI:456216"/>
        <dbReference type="EC" id="2.7.1.71"/>
    </reaction>
</comment>
<comment type="cofactor">
    <cofactor evidence="1">
        <name>Mg(2+)</name>
        <dbReference type="ChEBI" id="CHEBI:18420"/>
    </cofactor>
    <text evidence="1">Binds 1 Mg(2+) ion per subunit.</text>
</comment>
<comment type="pathway">
    <text evidence="1">Metabolic intermediate biosynthesis; chorismate biosynthesis; chorismate from D-erythrose 4-phosphate and phosphoenolpyruvate: step 5/7.</text>
</comment>
<comment type="subunit">
    <text evidence="1">Monomer.</text>
</comment>
<comment type="subcellular location">
    <subcellularLocation>
        <location evidence="1">Cytoplasm</location>
    </subcellularLocation>
</comment>
<comment type="similarity">
    <text evidence="1">Belongs to the shikimate kinase family.</text>
</comment>
<proteinExistence type="inferred from homology"/>
<dbReference type="EC" id="2.7.1.71" evidence="1"/>
<dbReference type="EMBL" id="CP000249">
    <property type="protein sequence ID" value="ABD12565.1"/>
    <property type="molecule type" value="Genomic_DNA"/>
</dbReference>
<dbReference type="RefSeq" id="WP_011437593.1">
    <property type="nucleotide sequence ID" value="NC_007777.1"/>
</dbReference>
<dbReference type="SMR" id="Q2J827"/>
<dbReference type="STRING" id="106370.Francci3_3208"/>
<dbReference type="KEGG" id="fra:Francci3_3208"/>
<dbReference type="eggNOG" id="COG0703">
    <property type="taxonomic scope" value="Bacteria"/>
</dbReference>
<dbReference type="HOGENOM" id="CLU_057607_3_3_11"/>
<dbReference type="OrthoDB" id="9800332at2"/>
<dbReference type="PhylomeDB" id="Q2J827"/>
<dbReference type="UniPathway" id="UPA00053">
    <property type="reaction ID" value="UER00088"/>
</dbReference>
<dbReference type="Proteomes" id="UP000001937">
    <property type="component" value="Chromosome"/>
</dbReference>
<dbReference type="GO" id="GO:0005829">
    <property type="term" value="C:cytosol"/>
    <property type="evidence" value="ECO:0007669"/>
    <property type="project" value="TreeGrafter"/>
</dbReference>
<dbReference type="GO" id="GO:0005524">
    <property type="term" value="F:ATP binding"/>
    <property type="evidence" value="ECO:0007669"/>
    <property type="project" value="UniProtKB-UniRule"/>
</dbReference>
<dbReference type="GO" id="GO:0000287">
    <property type="term" value="F:magnesium ion binding"/>
    <property type="evidence" value="ECO:0007669"/>
    <property type="project" value="UniProtKB-UniRule"/>
</dbReference>
<dbReference type="GO" id="GO:0004765">
    <property type="term" value="F:shikimate kinase activity"/>
    <property type="evidence" value="ECO:0007669"/>
    <property type="project" value="UniProtKB-UniRule"/>
</dbReference>
<dbReference type="GO" id="GO:0008652">
    <property type="term" value="P:amino acid biosynthetic process"/>
    <property type="evidence" value="ECO:0007669"/>
    <property type="project" value="UniProtKB-KW"/>
</dbReference>
<dbReference type="GO" id="GO:0009073">
    <property type="term" value="P:aromatic amino acid family biosynthetic process"/>
    <property type="evidence" value="ECO:0007669"/>
    <property type="project" value="UniProtKB-KW"/>
</dbReference>
<dbReference type="GO" id="GO:0009423">
    <property type="term" value="P:chorismate biosynthetic process"/>
    <property type="evidence" value="ECO:0007669"/>
    <property type="project" value="UniProtKB-UniRule"/>
</dbReference>
<dbReference type="CDD" id="cd00464">
    <property type="entry name" value="SK"/>
    <property type="match status" value="1"/>
</dbReference>
<dbReference type="Gene3D" id="3.40.50.300">
    <property type="entry name" value="P-loop containing nucleotide triphosphate hydrolases"/>
    <property type="match status" value="1"/>
</dbReference>
<dbReference type="HAMAP" id="MF_00109">
    <property type="entry name" value="Shikimate_kinase"/>
    <property type="match status" value="1"/>
</dbReference>
<dbReference type="InterPro" id="IPR027417">
    <property type="entry name" value="P-loop_NTPase"/>
</dbReference>
<dbReference type="InterPro" id="IPR031322">
    <property type="entry name" value="Shikimate/glucono_kinase"/>
</dbReference>
<dbReference type="InterPro" id="IPR000623">
    <property type="entry name" value="Shikimate_kinase/TSH1"/>
</dbReference>
<dbReference type="InterPro" id="IPR023000">
    <property type="entry name" value="Shikimate_kinase_CS"/>
</dbReference>
<dbReference type="PANTHER" id="PTHR21087">
    <property type="entry name" value="SHIKIMATE KINASE"/>
    <property type="match status" value="1"/>
</dbReference>
<dbReference type="PANTHER" id="PTHR21087:SF16">
    <property type="entry name" value="SHIKIMATE KINASE 1, CHLOROPLASTIC"/>
    <property type="match status" value="1"/>
</dbReference>
<dbReference type="Pfam" id="PF01202">
    <property type="entry name" value="SKI"/>
    <property type="match status" value="1"/>
</dbReference>
<dbReference type="PRINTS" id="PR01100">
    <property type="entry name" value="SHIKIMTKNASE"/>
</dbReference>
<dbReference type="SUPFAM" id="SSF52540">
    <property type="entry name" value="P-loop containing nucleoside triphosphate hydrolases"/>
    <property type="match status" value="1"/>
</dbReference>
<dbReference type="PROSITE" id="PS01128">
    <property type="entry name" value="SHIKIMATE_KINASE"/>
    <property type="match status" value="1"/>
</dbReference>
<evidence type="ECO:0000255" key="1">
    <source>
        <dbReference type="HAMAP-Rule" id="MF_00109"/>
    </source>
</evidence>
<evidence type="ECO:0000256" key="2">
    <source>
        <dbReference type="SAM" id="MobiDB-lite"/>
    </source>
</evidence>